<gene>
    <name type="primary">FAS2</name>
</gene>
<accession>P22648</accession>
<organism>
    <name type="scientific">Schistocerca americana</name>
    <name type="common">American grasshopper</name>
    <dbReference type="NCBI Taxonomy" id="7009"/>
    <lineage>
        <taxon>Eukaryota</taxon>
        <taxon>Metazoa</taxon>
        <taxon>Ecdysozoa</taxon>
        <taxon>Arthropoda</taxon>
        <taxon>Hexapoda</taxon>
        <taxon>Insecta</taxon>
        <taxon>Pterygota</taxon>
        <taxon>Neoptera</taxon>
        <taxon>Polyneoptera</taxon>
        <taxon>Orthoptera</taxon>
        <taxon>Caelifera</taxon>
        <taxon>Acrididea</taxon>
        <taxon>Acridomorpha</taxon>
        <taxon>Acridoidea</taxon>
        <taxon>Acrididae</taxon>
        <taxon>Cyrtacanthacridinae</taxon>
        <taxon>Schistocerca</taxon>
    </lineage>
</organism>
<evidence type="ECO:0000250" key="1"/>
<evidence type="ECO:0000255" key="2"/>
<evidence type="ECO:0000255" key="3">
    <source>
        <dbReference type="PROSITE-ProRule" id="PRU00114"/>
    </source>
</evidence>
<evidence type="ECO:0000255" key="4">
    <source>
        <dbReference type="PROSITE-ProRule" id="PRU00316"/>
    </source>
</evidence>
<sequence>MRTVACAVLLACFMGCLAGAWAQSAGLEILPNSENQTKPIGRSMLLTCKPNVTNKNLISQLRWTDPSGREVPFKNPTLLKPHIFVDWLPPPGEKVLTLMIPELREADTGTYTCSALYSNTKQLSKSVHVRTIMPITWDDAPEEQYPTVNETFKIRCRVSANPPAIVNWMRDGHIVETGDRYVVEQDGLTILNVTEMDDGTYTCRAIVIATGEMALRPIRVEVHTPPQMSGALPPKLEAVEGTDFTAKCAASGKPVPRYTWIRVDTARDLTKDGDRVSADVLLGELRIREVRPEDAANYSCTAKNAAGTATATVEVTVVVRPRIGRFDNISVASGKDSEAVLECHATGSPLPAVTFRKLSNPNRYINGIQPTEDRITVDGVDSPDGRTRIGKLIISNVLRSDDGLYECIATNKGGEVKKNGHLMVEFKPSFADTPQKEVWGWEQHAVNLTCLAHSIPNATISWHFNGADLFRGREGQELQQTGYTLFGSGPRSTLQVIPFNRKMYGNYKCTATNKHGTAVHEIMLREARVPSAVLQVKMDVMTATTVTFKFFGPGNDGGLPTKNYAVQYKQDSQGWEDALNRTWPVDSPYILENLKPQTRYNFRFAAQNEVGFGPWSSQQTHTTPRISAPEEPRLLGLPLSATSGTENEVVVSPYPNRYELRWQVPADNGEPITHYSVKSCPVEKYDTEWRLLPYPCQEHKLEGQATTFQLESLQPDTHYKVEVRATNAIGNSVPGQIIVRTVKDPSQMPGVANVEDGSEGQMSSAAIVVLVVAALLLALLVVDLVCCLVWRGGLIAALCHRCCSAAKTDDSDAKIASLYSWRFPLPYCSNKEDPAMLAPAKMQQATVKIPVIEEKEPLRDGKEPVPIIKERVKRETAVDFDVKKSVSRTSFVGKDSAV</sequence>
<feature type="signal peptide" evidence="1">
    <location>
        <begin position="1"/>
        <end position="22"/>
    </location>
</feature>
<feature type="chain" id="PRO_0000014759" description="Fasciclin-2">
    <location>
        <begin position="23"/>
        <end position="898"/>
    </location>
</feature>
<feature type="topological domain" description="Extracellular" evidence="2">
    <location>
        <begin position="23"/>
        <end position="764"/>
    </location>
</feature>
<feature type="transmembrane region" description="Helical" evidence="2">
    <location>
        <begin position="765"/>
        <end position="782"/>
    </location>
</feature>
<feature type="topological domain" description="Cytoplasmic" evidence="2">
    <location>
        <begin position="783"/>
        <end position="898"/>
    </location>
</feature>
<feature type="domain" description="Ig-like C2-type 1">
    <location>
        <begin position="31"/>
        <end position="124"/>
    </location>
</feature>
<feature type="domain" description="Ig-like C2-type 2">
    <location>
        <begin position="134"/>
        <end position="219"/>
    </location>
</feature>
<feature type="domain" description="Ig-like C2-type 3">
    <location>
        <begin position="226"/>
        <end position="316"/>
    </location>
</feature>
<feature type="domain" description="Ig-like C2-type 4">
    <location>
        <begin position="321"/>
        <end position="423"/>
    </location>
</feature>
<feature type="domain" description="Ig-like C2-type 5">
    <location>
        <begin position="428"/>
        <end position="525"/>
    </location>
</feature>
<feature type="domain" description="Fibronectin type-III 1" evidence="4">
    <location>
        <begin position="532"/>
        <end position="626"/>
    </location>
</feature>
<feature type="domain" description="Fibronectin type-III 2" evidence="4">
    <location>
        <begin position="644"/>
        <end position="745"/>
    </location>
</feature>
<feature type="glycosylation site" description="N-linked (GlcNAc...) asparagine" evidence="2">
    <location>
        <position position="35"/>
    </location>
</feature>
<feature type="glycosylation site" description="N-linked (GlcNAc...) asparagine" evidence="2">
    <location>
        <position position="51"/>
    </location>
</feature>
<feature type="glycosylation site" description="N-linked (GlcNAc...) asparagine" evidence="2">
    <location>
        <position position="149"/>
    </location>
</feature>
<feature type="glycosylation site" description="N-linked (GlcNAc...) asparagine" evidence="2">
    <location>
        <position position="192"/>
    </location>
</feature>
<feature type="glycosylation site" description="N-linked (GlcNAc...) asparagine" evidence="2">
    <location>
        <position position="297"/>
    </location>
</feature>
<feature type="glycosylation site" description="N-linked (GlcNAc...) asparagine" evidence="2">
    <location>
        <position position="328"/>
    </location>
</feature>
<feature type="glycosylation site" description="N-linked (GlcNAc...) asparagine" evidence="2">
    <location>
        <position position="447"/>
    </location>
</feature>
<feature type="glycosylation site" description="N-linked (GlcNAc...) asparagine" evidence="2">
    <location>
        <position position="457"/>
    </location>
</feature>
<feature type="glycosylation site" description="N-linked (GlcNAc...) asparagine" evidence="2">
    <location>
        <position position="580"/>
    </location>
</feature>
<feature type="disulfide bond" evidence="3">
    <location>
        <begin position="48"/>
        <end position="113"/>
    </location>
</feature>
<feature type="disulfide bond" evidence="3">
    <location>
        <begin position="156"/>
        <end position="203"/>
    </location>
</feature>
<feature type="disulfide bond" evidence="3">
    <location>
        <begin position="248"/>
        <end position="300"/>
    </location>
</feature>
<feature type="disulfide bond" evidence="3">
    <location>
        <begin position="343"/>
        <end position="407"/>
    </location>
</feature>
<feature type="disulfide bond" evidence="3">
    <location>
        <begin position="450"/>
        <end position="509"/>
    </location>
</feature>
<dbReference type="EMBL" id="J03789">
    <property type="protein sequence ID" value="AAA29810.1"/>
    <property type="molecule type" value="mRNA"/>
</dbReference>
<dbReference type="PIR" id="A40114">
    <property type="entry name" value="A40114"/>
</dbReference>
<dbReference type="SMR" id="P22648"/>
<dbReference type="GlyCosmos" id="P22648">
    <property type="glycosylation" value="9 sites, No reported glycans"/>
</dbReference>
<dbReference type="OrthoDB" id="10056271at2759"/>
<dbReference type="GO" id="GO:0005886">
    <property type="term" value="C:plasma membrane"/>
    <property type="evidence" value="ECO:0007669"/>
    <property type="project" value="TreeGrafter"/>
</dbReference>
<dbReference type="GO" id="GO:0009653">
    <property type="term" value="P:anatomical structure morphogenesis"/>
    <property type="evidence" value="ECO:0007669"/>
    <property type="project" value="UniProtKB-ARBA"/>
</dbReference>
<dbReference type="GO" id="GO:0030154">
    <property type="term" value="P:cell differentiation"/>
    <property type="evidence" value="ECO:0007669"/>
    <property type="project" value="UniProtKB-KW"/>
</dbReference>
<dbReference type="GO" id="GO:0007156">
    <property type="term" value="P:homophilic cell adhesion via plasma membrane adhesion molecules"/>
    <property type="evidence" value="ECO:0007669"/>
    <property type="project" value="TreeGrafter"/>
</dbReference>
<dbReference type="GO" id="GO:0007399">
    <property type="term" value="P:nervous system development"/>
    <property type="evidence" value="ECO:0007669"/>
    <property type="project" value="UniProtKB-KW"/>
</dbReference>
<dbReference type="CDD" id="cd00063">
    <property type="entry name" value="FN3"/>
    <property type="match status" value="2"/>
</dbReference>
<dbReference type="CDD" id="cd00096">
    <property type="entry name" value="Ig"/>
    <property type="match status" value="2"/>
</dbReference>
<dbReference type="CDD" id="cd20976">
    <property type="entry name" value="IgI_4_MYLK-like"/>
    <property type="match status" value="1"/>
</dbReference>
<dbReference type="CDD" id="cd05742">
    <property type="entry name" value="IgI_VEGFR_like"/>
    <property type="match status" value="1"/>
</dbReference>
<dbReference type="Gene3D" id="2.60.40.10">
    <property type="entry name" value="Immunoglobulins"/>
    <property type="match status" value="7"/>
</dbReference>
<dbReference type="InterPro" id="IPR050958">
    <property type="entry name" value="Cell_Adh-Cytoskel_Orgn"/>
</dbReference>
<dbReference type="InterPro" id="IPR003961">
    <property type="entry name" value="FN3_dom"/>
</dbReference>
<dbReference type="InterPro" id="IPR036116">
    <property type="entry name" value="FN3_sf"/>
</dbReference>
<dbReference type="InterPro" id="IPR007110">
    <property type="entry name" value="Ig-like_dom"/>
</dbReference>
<dbReference type="InterPro" id="IPR036179">
    <property type="entry name" value="Ig-like_dom_sf"/>
</dbReference>
<dbReference type="InterPro" id="IPR013783">
    <property type="entry name" value="Ig-like_fold"/>
</dbReference>
<dbReference type="InterPro" id="IPR013098">
    <property type="entry name" value="Ig_I-set"/>
</dbReference>
<dbReference type="InterPro" id="IPR003599">
    <property type="entry name" value="Ig_sub"/>
</dbReference>
<dbReference type="InterPro" id="IPR003598">
    <property type="entry name" value="Ig_sub2"/>
</dbReference>
<dbReference type="InterPro" id="IPR009138">
    <property type="entry name" value="Neural_cell_adh"/>
</dbReference>
<dbReference type="PANTHER" id="PTHR45080">
    <property type="entry name" value="CONTACTIN 5"/>
    <property type="match status" value="1"/>
</dbReference>
<dbReference type="PANTHER" id="PTHR45080:SF8">
    <property type="entry name" value="IG-LIKE DOMAIN-CONTAINING PROTEIN"/>
    <property type="match status" value="1"/>
</dbReference>
<dbReference type="Pfam" id="PF00041">
    <property type="entry name" value="fn3"/>
    <property type="match status" value="2"/>
</dbReference>
<dbReference type="Pfam" id="PF07679">
    <property type="entry name" value="I-set"/>
    <property type="match status" value="2"/>
</dbReference>
<dbReference type="Pfam" id="PF13927">
    <property type="entry name" value="Ig_3"/>
    <property type="match status" value="2"/>
</dbReference>
<dbReference type="PRINTS" id="PR01838">
    <property type="entry name" value="NCAMFAMILY"/>
</dbReference>
<dbReference type="SMART" id="SM00060">
    <property type="entry name" value="FN3"/>
    <property type="match status" value="2"/>
</dbReference>
<dbReference type="SMART" id="SM00409">
    <property type="entry name" value="IG"/>
    <property type="match status" value="5"/>
</dbReference>
<dbReference type="SMART" id="SM00408">
    <property type="entry name" value="IGc2"/>
    <property type="match status" value="5"/>
</dbReference>
<dbReference type="SUPFAM" id="SSF49265">
    <property type="entry name" value="Fibronectin type III"/>
    <property type="match status" value="1"/>
</dbReference>
<dbReference type="SUPFAM" id="SSF48726">
    <property type="entry name" value="Immunoglobulin"/>
    <property type="match status" value="5"/>
</dbReference>
<dbReference type="PROSITE" id="PS50853">
    <property type="entry name" value="FN3"/>
    <property type="match status" value="2"/>
</dbReference>
<dbReference type="PROSITE" id="PS50835">
    <property type="entry name" value="IG_LIKE"/>
    <property type="match status" value="5"/>
</dbReference>
<keyword id="KW-0130">Cell adhesion</keyword>
<keyword id="KW-0217">Developmental protein</keyword>
<keyword id="KW-0221">Differentiation</keyword>
<keyword id="KW-0903">Direct protein sequencing</keyword>
<keyword id="KW-1015">Disulfide bond</keyword>
<keyword id="KW-0325">Glycoprotein</keyword>
<keyword id="KW-0393">Immunoglobulin domain</keyword>
<keyword id="KW-0472">Membrane</keyword>
<keyword id="KW-0524">Neurogenesis</keyword>
<keyword id="KW-0677">Repeat</keyword>
<keyword id="KW-0732">Signal</keyword>
<keyword id="KW-0812">Transmembrane</keyword>
<keyword id="KW-1133">Transmembrane helix</keyword>
<comment type="function">
    <text>Neuronal recognition molecule. Involved in a pathway recognition for axons during the development of nerve fascicles.</text>
</comment>
<comment type="subcellular location">
    <subcellularLocation>
        <location>Membrane</location>
        <topology>Single-pass type I membrane protein</topology>
    </subcellularLocation>
</comment>
<reference key="1">
    <citation type="journal article" date="1988" name="Science">
        <title>Growth cone guidance in insects: fasciclin II is a member of the immunoglobulin superfamily.</title>
        <authorList>
            <person name="Harrelson A.L."/>
            <person name="Goodman C.S."/>
        </authorList>
    </citation>
    <scope>NUCLEOTIDE SEQUENCE [MRNA]</scope>
</reference>
<reference key="2">
    <citation type="journal article" date="1988" name="Proc. Natl. Acad. Sci. U.S.A.">
        <title>Characterization and cloning of fasciclin I and fasciclin II glycoproteins in the grasshopper.</title>
        <authorList>
            <person name="Snow P.M."/>
            <person name="Zinn K."/>
            <person name="Harrelson A.L."/>
            <person name="McAllister L."/>
            <person name="Schilling J."/>
            <person name="Bastiani M.J."/>
            <person name="Makk G."/>
            <person name="Goodman C.S."/>
        </authorList>
    </citation>
    <scope>PROTEIN SEQUENCE OF 423-436</scope>
</reference>
<name>FAS2_SCHAM</name>
<protein>
    <recommendedName>
        <fullName>Fasciclin-2</fullName>
    </recommendedName>
    <alternativeName>
        <fullName>Fasciclin II</fullName>
        <shortName>FAS II</shortName>
    </alternativeName>
</protein>
<proteinExistence type="evidence at protein level"/>